<proteinExistence type="evidence at protein level"/>
<name>GLS24_STRP6</name>
<evidence type="ECO:0000256" key="1">
    <source>
        <dbReference type="SAM" id="MobiDB-lite"/>
    </source>
</evidence>
<evidence type="ECO:0000305" key="2"/>
<feature type="chain" id="PRO_0000228683" description="Stress response regulator gls24 homolog">
    <location>
        <begin position="1"/>
        <end position="179"/>
    </location>
</feature>
<feature type="region of interest" description="Disordered" evidence="1">
    <location>
        <begin position="147"/>
        <end position="179"/>
    </location>
</feature>
<feature type="compositionally biased region" description="Basic and acidic residues" evidence="1">
    <location>
        <begin position="165"/>
        <end position="179"/>
    </location>
</feature>
<dbReference type="EMBL" id="CP000003">
    <property type="protein sequence ID" value="AAT87097.1"/>
    <property type="molecule type" value="Genomic_DNA"/>
</dbReference>
<dbReference type="RefSeq" id="WP_002984475.1">
    <property type="nucleotide sequence ID" value="NC_006086.1"/>
</dbReference>
<dbReference type="KEGG" id="spa:M6_Spy0962"/>
<dbReference type="HOGENOM" id="CLU_113198_1_1_9"/>
<dbReference type="Proteomes" id="UP000001167">
    <property type="component" value="Chromosome"/>
</dbReference>
<dbReference type="InterPro" id="IPR005531">
    <property type="entry name" value="Asp23"/>
</dbReference>
<dbReference type="PANTHER" id="PTHR34297:SF3">
    <property type="entry name" value="ALKALINE SHOCK PROTEIN 23"/>
    <property type="match status" value="1"/>
</dbReference>
<dbReference type="PANTHER" id="PTHR34297">
    <property type="entry name" value="HYPOTHETICAL CYTOSOLIC PROTEIN-RELATED"/>
    <property type="match status" value="1"/>
</dbReference>
<dbReference type="Pfam" id="PF03780">
    <property type="entry name" value="Asp23"/>
    <property type="match status" value="1"/>
</dbReference>
<gene>
    <name type="ordered locus">M6_Spy0962</name>
</gene>
<sequence length="179" mass="19944">MTETYIKNTSKDLTSAIRGQLTYDDKVIEKIVGLALENVDGLLGVNGGFFANLKDKLVNTESVRDGVNVEVGKKQVAVDLDIVAEYQKHVPTIYDSIKSIVEEEVKRMTDLDVIEVNVKVVDIKTKEQFEAEKVSLQDKVSDMARSTSEFTSHQVENVKASVDNGVEKLQDQKAEPRVK</sequence>
<comment type="similarity">
    <text evidence="2">Belongs to the asp23 family.</text>
</comment>
<keyword id="KW-0903">Direct protein sequencing</keyword>
<accession>Q5XBW6</accession>
<accession>P82481</accession>
<reference key="1">
    <citation type="journal article" date="2004" name="J. Infect. Dis.">
        <title>Progress toward characterization of the group A Streptococcus metagenome: complete genome sequence of a macrolide-resistant serotype M6 strain.</title>
        <authorList>
            <person name="Banks D.J."/>
            <person name="Porcella S.F."/>
            <person name="Barbian K.D."/>
            <person name="Beres S.B."/>
            <person name="Philips L.E."/>
            <person name="Voyich J.M."/>
            <person name="DeLeo F.R."/>
            <person name="Martin J.M."/>
            <person name="Somerville G.A."/>
            <person name="Musser J.M."/>
        </authorList>
    </citation>
    <scope>NUCLEOTIDE SEQUENCE [LARGE SCALE GENOMIC DNA]</scope>
    <source>
        <strain>ATCC BAA-946 / MGAS10394</strain>
    </source>
</reference>
<reference key="2">
    <citation type="submission" date="2000-05" db="UniProtKB">
        <title>Two-dimensional gel electrophoresis map of Streptococcus pyogenes proteins.</title>
        <authorList>
            <person name="Hogan D.A."/>
            <person name="Du P."/>
            <person name="Stevenson T.I."/>
            <person name="Whitton M."/>
            <person name="Kilby G.W."/>
            <person name="Rogers J."/>
            <person name="VanBogelen R.A."/>
        </authorList>
    </citation>
    <scope>PROTEIN SEQUENCE OF 2-9; 12-30; 89-119; 127-158 AND 168-178</scope>
    <scope>IDENTIFICATION BY MASS SPECTROMETRY</scope>
    <source>
        <strain>JRS4 / Serotype M6</strain>
    </source>
</reference>
<protein>
    <recommendedName>
        <fullName>Stress response regulator gls24 homolog</fullName>
    </recommendedName>
</protein>
<organism>
    <name type="scientific">Streptococcus pyogenes serotype M6 (strain ATCC BAA-946 / MGAS10394)</name>
    <dbReference type="NCBI Taxonomy" id="286636"/>
    <lineage>
        <taxon>Bacteria</taxon>
        <taxon>Bacillati</taxon>
        <taxon>Bacillota</taxon>
        <taxon>Bacilli</taxon>
        <taxon>Lactobacillales</taxon>
        <taxon>Streptococcaceae</taxon>
        <taxon>Streptococcus</taxon>
    </lineage>
</organism>